<sequence>MKLTMFVVGLLGLLAAPGFAYTVNINGNDGNVDGSGQQSVSINGVHNVANIDNNNGWDSWNSLWDYENSFAATRLFSKKSCIVHRMNKDAMPSLQDLDTMVKEQKGKGPGGAPPKDLMYSVNPTRVEDLNTFGPKIAGMCRGIPTYVAEEIPGPNQPLYSKKCYTADILWILRMSFCGTSVETY</sequence>
<organism>
    <name type="scientific">Mus musculus</name>
    <name type="common">Mouse</name>
    <dbReference type="NCBI Taxonomy" id="10090"/>
    <lineage>
        <taxon>Eukaryota</taxon>
        <taxon>Metazoa</taxon>
        <taxon>Chordata</taxon>
        <taxon>Craniata</taxon>
        <taxon>Vertebrata</taxon>
        <taxon>Euteleostomi</taxon>
        <taxon>Mammalia</taxon>
        <taxon>Eutheria</taxon>
        <taxon>Euarchontoglires</taxon>
        <taxon>Glires</taxon>
        <taxon>Rodentia</taxon>
        <taxon>Myomorpha</taxon>
        <taxon>Muroidea</taxon>
        <taxon>Muridae</taxon>
        <taxon>Murinae</taxon>
        <taxon>Mus</taxon>
        <taxon>Mus</taxon>
    </lineage>
</organism>
<proteinExistence type="evidence at transcript level"/>
<name>GKN1_MOUSE</name>
<keyword id="KW-1015">Disulfide bond</keyword>
<keyword id="KW-0333">Golgi apparatus</keyword>
<keyword id="KW-0497">Mitogen</keyword>
<keyword id="KW-1185">Reference proteome</keyword>
<keyword id="KW-0964">Secreted</keyword>
<keyword id="KW-0732">Signal</keyword>
<dbReference type="EMBL" id="AY139183">
    <property type="protein sequence ID" value="AAN75448.1"/>
    <property type="molecule type" value="Genomic_DNA"/>
</dbReference>
<dbReference type="EMBL" id="AK008622">
    <property type="protein sequence ID" value="BAB25784.1"/>
    <property type="molecule type" value="mRNA"/>
</dbReference>
<dbReference type="EMBL" id="AK008641">
    <property type="protein sequence ID" value="BAB25801.1"/>
    <property type="molecule type" value="mRNA"/>
</dbReference>
<dbReference type="EMBL" id="AK008647">
    <property type="protein sequence ID" value="BAB25805.1"/>
    <property type="molecule type" value="mRNA"/>
</dbReference>
<dbReference type="EMBL" id="AK008722">
    <property type="protein sequence ID" value="BAB25856.1"/>
    <property type="molecule type" value="mRNA"/>
</dbReference>
<dbReference type="EMBL" id="AK008745">
    <property type="protein sequence ID" value="BAB25872.1"/>
    <property type="molecule type" value="mRNA"/>
</dbReference>
<dbReference type="EMBL" id="AK008933">
    <property type="protein sequence ID" value="BAB25975.1"/>
    <property type="molecule type" value="mRNA"/>
</dbReference>
<dbReference type="EMBL" id="AK008956">
    <property type="status" value="NOT_ANNOTATED_CDS"/>
    <property type="molecule type" value="mRNA"/>
</dbReference>
<dbReference type="EMBL" id="AK008990">
    <property type="protein sequence ID" value="BAB26010.1"/>
    <property type="molecule type" value="mRNA"/>
</dbReference>
<dbReference type="EMBL" id="AK009145">
    <property type="protein sequence ID" value="BAB26103.1"/>
    <property type="molecule type" value="mRNA"/>
</dbReference>
<dbReference type="EMBL" id="AK019050">
    <property type="protein sequence ID" value="BAB31525.3"/>
    <property type="molecule type" value="mRNA"/>
</dbReference>
<dbReference type="CCDS" id="CCDS20319.1"/>
<dbReference type="RefSeq" id="NP_079742.1">
    <property type="nucleotide sequence ID" value="NM_025466.1"/>
</dbReference>
<dbReference type="FunCoup" id="Q9CR36">
    <property type="interactions" value="114"/>
</dbReference>
<dbReference type="STRING" id="10090.ENSMUSP00000032129"/>
<dbReference type="PhosphoSitePlus" id="Q9CR36"/>
<dbReference type="PaxDb" id="10090-ENSMUSP00000032129"/>
<dbReference type="ProteomicsDB" id="268881"/>
<dbReference type="Ensembl" id="ENSMUST00000032129.3">
    <property type="protein sequence ID" value="ENSMUSP00000032129.2"/>
    <property type="gene ID" value="ENSMUSG00000030050.5"/>
</dbReference>
<dbReference type="GeneID" id="66283"/>
<dbReference type="KEGG" id="mmu:66283"/>
<dbReference type="UCSC" id="uc009cth.1">
    <property type="organism name" value="mouse"/>
</dbReference>
<dbReference type="AGR" id="MGI:1913533"/>
<dbReference type="CTD" id="56287"/>
<dbReference type="MGI" id="MGI:1913533">
    <property type="gene designation" value="Gkn1"/>
</dbReference>
<dbReference type="eggNOG" id="ENOG502S4AB">
    <property type="taxonomic scope" value="Eukaryota"/>
</dbReference>
<dbReference type="GeneTree" id="ENSGT00930000150969"/>
<dbReference type="InParanoid" id="Q9CR36"/>
<dbReference type="OMA" id="YSEKCFT"/>
<dbReference type="OrthoDB" id="8674753at2759"/>
<dbReference type="PhylomeDB" id="Q9CR36"/>
<dbReference type="BioGRID-ORCS" id="66283">
    <property type="hits" value="2 hits in 76 CRISPR screens"/>
</dbReference>
<dbReference type="ChiTaRS" id="Gkn1">
    <property type="organism name" value="mouse"/>
</dbReference>
<dbReference type="PRO" id="PR:Q9CR36"/>
<dbReference type="Proteomes" id="UP000000589">
    <property type="component" value="Chromosome 6"/>
</dbReference>
<dbReference type="RNAct" id="Q9CR36">
    <property type="molecule type" value="protein"/>
</dbReference>
<dbReference type="GO" id="GO:0005576">
    <property type="term" value="C:extracellular region"/>
    <property type="evidence" value="ECO:0000250"/>
    <property type="project" value="UniProtKB"/>
</dbReference>
<dbReference type="GO" id="GO:0005794">
    <property type="term" value="C:Golgi apparatus"/>
    <property type="evidence" value="ECO:0007669"/>
    <property type="project" value="UniProtKB-SubCell"/>
</dbReference>
<dbReference type="GO" id="GO:0030141">
    <property type="term" value="C:secretory granule"/>
    <property type="evidence" value="ECO:0000314"/>
    <property type="project" value="MGI"/>
</dbReference>
<dbReference type="GO" id="GO:0008083">
    <property type="term" value="F:growth factor activity"/>
    <property type="evidence" value="ECO:0000314"/>
    <property type="project" value="MGI"/>
</dbReference>
<dbReference type="GO" id="GO:0051781">
    <property type="term" value="P:positive regulation of cell division"/>
    <property type="evidence" value="ECO:0007669"/>
    <property type="project" value="UniProtKB-KW"/>
</dbReference>
<dbReference type="GO" id="GO:0008284">
    <property type="term" value="P:positive regulation of cell population proliferation"/>
    <property type="evidence" value="ECO:0000314"/>
    <property type="project" value="MGI"/>
</dbReference>
<dbReference type="FunFam" id="3.30.390.150:FF:000003">
    <property type="entry name" value="Gastrokine 1"/>
    <property type="match status" value="1"/>
</dbReference>
<dbReference type="Gene3D" id="3.30.390.150">
    <property type="match status" value="1"/>
</dbReference>
<dbReference type="InterPro" id="IPR007084">
    <property type="entry name" value="BRICHOS_dom"/>
</dbReference>
<dbReference type="InterPro" id="IPR051772">
    <property type="entry name" value="Gastrokine"/>
</dbReference>
<dbReference type="PANTHER" id="PTHR16483">
    <property type="entry name" value="GASTROKINE 1"/>
    <property type="match status" value="1"/>
</dbReference>
<dbReference type="Pfam" id="PF04089">
    <property type="entry name" value="BRICHOS"/>
    <property type="match status" value="1"/>
</dbReference>
<dbReference type="SMART" id="SM01039">
    <property type="entry name" value="BRICHOS"/>
    <property type="match status" value="1"/>
</dbReference>
<dbReference type="PROSITE" id="PS50869">
    <property type="entry name" value="BRICHOS"/>
    <property type="match status" value="1"/>
</dbReference>
<gene>
    <name type="primary">Gkn1</name>
    <name type="synonym">Amp18</name>
    <name type="synonym">Ca11</name>
</gene>
<feature type="signal peptide" evidence="3">
    <location>
        <begin position="1"/>
        <end position="20"/>
    </location>
</feature>
<feature type="chain" id="PRO_0000021333" description="Gastrokine-1">
    <location>
        <begin position="21"/>
        <end position="184"/>
    </location>
</feature>
<feature type="domain" description="BRICHOS" evidence="4">
    <location>
        <begin position="54"/>
        <end position="148"/>
    </location>
</feature>
<feature type="disulfide bond" evidence="1">
    <location>
        <begin position="81"/>
        <end position="140"/>
    </location>
</feature>
<feature type="sequence conflict" description="In Ref. 2; BAB26103." evidence="7" ref="2">
    <original>P</original>
    <variation>L</variation>
    <location>
        <position position="113"/>
    </location>
</feature>
<comment type="function">
    <text evidence="5">Has mitogenic activity and may be involved in maintaining the integrity of the gastric mucosal epithelium.</text>
</comment>
<comment type="subcellular location">
    <subcellularLocation>
        <location evidence="5">Secreted</location>
    </subcellularLocation>
    <subcellularLocation>
        <location evidence="2">Cytoplasmic granule</location>
    </subcellularLocation>
    <subcellularLocation>
        <location evidence="2">Golgi apparatus</location>
    </subcellularLocation>
    <text evidence="2">Shows abundant granular cytoplasmic staining, with perinuclear accentuation suggestive of the Golgi apparatus.</text>
</comment>
<comment type="tissue specificity">
    <text evidence="5 6">Expressed in the stomach (PubMed:15221938). Highly expressed specifically in surface cells of the antrum mucosa from where it is secreted.</text>
</comment>
<comment type="similarity">
    <text evidence="7">Belongs to the gastrokine family.</text>
</comment>
<reference key="1">
    <citation type="journal article" date="2003" name="Am. J. Physiol.">
        <title>A novel mitogenic protein that is highly expressed in cells of the gastric antrum mucosa.</title>
        <authorList>
            <person name="Martin T.E."/>
            <person name="Powell C.T."/>
            <person name="Wang Z."/>
            <person name="Bhattacharyya S."/>
            <person name="Walsh-Reitz M.M."/>
            <person name="Agarwal K."/>
            <person name="Toback F.G."/>
        </authorList>
    </citation>
    <scope>NUCLEOTIDE SEQUENCE [GENOMIC DNA]</scope>
    <scope>FUNCTION</scope>
    <scope>SUBCELLULAR LOCATION</scope>
    <scope>TISSUE SPECIFICITY</scope>
    <source>
        <strain>129/SvJ</strain>
    </source>
</reference>
<reference key="2">
    <citation type="journal article" date="2005" name="Science">
        <title>The transcriptional landscape of the mammalian genome.</title>
        <authorList>
            <person name="Carninci P."/>
            <person name="Kasukawa T."/>
            <person name="Katayama S."/>
            <person name="Gough J."/>
            <person name="Frith M.C."/>
            <person name="Maeda N."/>
            <person name="Oyama R."/>
            <person name="Ravasi T."/>
            <person name="Lenhard B."/>
            <person name="Wells C."/>
            <person name="Kodzius R."/>
            <person name="Shimokawa K."/>
            <person name="Bajic V.B."/>
            <person name="Brenner S.E."/>
            <person name="Batalov S."/>
            <person name="Forrest A.R."/>
            <person name="Zavolan M."/>
            <person name="Davis M.J."/>
            <person name="Wilming L.G."/>
            <person name="Aidinis V."/>
            <person name="Allen J.E."/>
            <person name="Ambesi-Impiombato A."/>
            <person name="Apweiler R."/>
            <person name="Aturaliya R.N."/>
            <person name="Bailey T.L."/>
            <person name="Bansal M."/>
            <person name="Baxter L."/>
            <person name="Beisel K.W."/>
            <person name="Bersano T."/>
            <person name="Bono H."/>
            <person name="Chalk A.M."/>
            <person name="Chiu K.P."/>
            <person name="Choudhary V."/>
            <person name="Christoffels A."/>
            <person name="Clutterbuck D.R."/>
            <person name="Crowe M.L."/>
            <person name="Dalla E."/>
            <person name="Dalrymple B.P."/>
            <person name="de Bono B."/>
            <person name="Della Gatta G."/>
            <person name="di Bernardo D."/>
            <person name="Down T."/>
            <person name="Engstrom P."/>
            <person name="Fagiolini M."/>
            <person name="Faulkner G."/>
            <person name="Fletcher C.F."/>
            <person name="Fukushima T."/>
            <person name="Furuno M."/>
            <person name="Futaki S."/>
            <person name="Gariboldi M."/>
            <person name="Georgii-Hemming P."/>
            <person name="Gingeras T.R."/>
            <person name="Gojobori T."/>
            <person name="Green R.E."/>
            <person name="Gustincich S."/>
            <person name="Harbers M."/>
            <person name="Hayashi Y."/>
            <person name="Hensch T.K."/>
            <person name="Hirokawa N."/>
            <person name="Hill D."/>
            <person name="Huminiecki L."/>
            <person name="Iacono M."/>
            <person name="Ikeo K."/>
            <person name="Iwama A."/>
            <person name="Ishikawa T."/>
            <person name="Jakt M."/>
            <person name="Kanapin A."/>
            <person name="Katoh M."/>
            <person name="Kawasawa Y."/>
            <person name="Kelso J."/>
            <person name="Kitamura H."/>
            <person name="Kitano H."/>
            <person name="Kollias G."/>
            <person name="Krishnan S.P."/>
            <person name="Kruger A."/>
            <person name="Kummerfeld S.K."/>
            <person name="Kurochkin I.V."/>
            <person name="Lareau L.F."/>
            <person name="Lazarevic D."/>
            <person name="Lipovich L."/>
            <person name="Liu J."/>
            <person name="Liuni S."/>
            <person name="McWilliam S."/>
            <person name="Madan Babu M."/>
            <person name="Madera M."/>
            <person name="Marchionni L."/>
            <person name="Matsuda H."/>
            <person name="Matsuzawa S."/>
            <person name="Miki H."/>
            <person name="Mignone F."/>
            <person name="Miyake S."/>
            <person name="Morris K."/>
            <person name="Mottagui-Tabar S."/>
            <person name="Mulder N."/>
            <person name="Nakano N."/>
            <person name="Nakauchi H."/>
            <person name="Ng P."/>
            <person name="Nilsson R."/>
            <person name="Nishiguchi S."/>
            <person name="Nishikawa S."/>
            <person name="Nori F."/>
            <person name="Ohara O."/>
            <person name="Okazaki Y."/>
            <person name="Orlando V."/>
            <person name="Pang K.C."/>
            <person name="Pavan W.J."/>
            <person name="Pavesi G."/>
            <person name="Pesole G."/>
            <person name="Petrovsky N."/>
            <person name="Piazza S."/>
            <person name="Reed J."/>
            <person name="Reid J.F."/>
            <person name="Ring B.Z."/>
            <person name="Ringwald M."/>
            <person name="Rost B."/>
            <person name="Ruan Y."/>
            <person name="Salzberg S.L."/>
            <person name="Sandelin A."/>
            <person name="Schneider C."/>
            <person name="Schoenbach C."/>
            <person name="Sekiguchi K."/>
            <person name="Semple C.A."/>
            <person name="Seno S."/>
            <person name="Sessa L."/>
            <person name="Sheng Y."/>
            <person name="Shibata Y."/>
            <person name="Shimada H."/>
            <person name="Shimada K."/>
            <person name="Silva D."/>
            <person name="Sinclair B."/>
            <person name="Sperling S."/>
            <person name="Stupka E."/>
            <person name="Sugiura K."/>
            <person name="Sultana R."/>
            <person name="Takenaka Y."/>
            <person name="Taki K."/>
            <person name="Tammoja K."/>
            <person name="Tan S.L."/>
            <person name="Tang S."/>
            <person name="Taylor M.S."/>
            <person name="Tegner J."/>
            <person name="Teichmann S.A."/>
            <person name="Ueda H.R."/>
            <person name="van Nimwegen E."/>
            <person name="Verardo R."/>
            <person name="Wei C.L."/>
            <person name="Yagi K."/>
            <person name="Yamanishi H."/>
            <person name="Zabarovsky E."/>
            <person name="Zhu S."/>
            <person name="Zimmer A."/>
            <person name="Hide W."/>
            <person name="Bult C."/>
            <person name="Grimmond S.M."/>
            <person name="Teasdale R.D."/>
            <person name="Liu E.T."/>
            <person name="Brusic V."/>
            <person name="Quackenbush J."/>
            <person name="Wahlestedt C."/>
            <person name="Mattick J.S."/>
            <person name="Hume D.A."/>
            <person name="Kai C."/>
            <person name="Sasaki D."/>
            <person name="Tomaru Y."/>
            <person name="Fukuda S."/>
            <person name="Kanamori-Katayama M."/>
            <person name="Suzuki M."/>
            <person name="Aoki J."/>
            <person name="Arakawa T."/>
            <person name="Iida J."/>
            <person name="Imamura K."/>
            <person name="Itoh M."/>
            <person name="Kato T."/>
            <person name="Kawaji H."/>
            <person name="Kawagashira N."/>
            <person name="Kawashima T."/>
            <person name="Kojima M."/>
            <person name="Kondo S."/>
            <person name="Konno H."/>
            <person name="Nakano K."/>
            <person name="Ninomiya N."/>
            <person name="Nishio T."/>
            <person name="Okada M."/>
            <person name="Plessy C."/>
            <person name="Shibata K."/>
            <person name="Shiraki T."/>
            <person name="Suzuki S."/>
            <person name="Tagami M."/>
            <person name="Waki K."/>
            <person name="Watahiki A."/>
            <person name="Okamura-Oho Y."/>
            <person name="Suzuki H."/>
            <person name="Kawai J."/>
            <person name="Hayashizaki Y."/>
        </authorList>
    </citation>
    <scope>NUCLEOTIDE SEQUENCE [LARGE SCALE MRNA]</scope>
    <source>
        <strain>C57BL/6J</strain>
        <tissue>Stomach</tissue>
        <tissue>Tongue</tissue>
    </source>
</reference>
<reference key="3">
    <citation type="journal article" date="2004" name="J. Pathol.">
        <title>Gastrokine 1 is abundantly and specifically expressed in superficial gastric epithelium, down-regulated in gastric carcinoma, and shows high evolutionary conservation.</title>
        <authorList>
            <person name="Oien K.A."/>
            <person name="McGregor F."/>
            <person name="Butler S."/>
            <person name="Ferrier R.K."/>
            <person name="Downie I."/>
            <person name="Bryce S."/>
            <person name="Burns S."/>
            <person name="Keith W.N."/>
        </authorList>
    </citation>
    <scope>TISSUE SPECIFICITY</scope>
</reference>
<evidence type="ECO:0000250" key="1"/>
<evidence type="ECO:0000250" key="2">
    <source>
        <dbReference type="UniProtKB" id="Q9NS71"/>
    </source>
</evidence>
<evidence type="ECO:0000255" key="3"/>
<evidence type="ECO:0000255" key="4">
    <source>
        <dbReference type="PROSITE-ProRule" id="PRU00255"/>
    </source>
</evidence>
<evidence type="ECO:0000269" key="5">
    <source>
    </source>
</evidence>
<evidence type="ECO:0000269" key="6">
    <source>
    </source>
</evidence>
<evidence type="ECO:0000305" key="7"/>
<protein>
    <recommendedName>
        <fullName>Gastrokine-1</fullName>
    </recommendedName>
    <alternativeName>
        <fullName>18 kDa antrum mucosa protein</fullName>
        <shortName>AMP-18</shortName>
    </alternativeName>
    <alternativeName>
        <fullName>Protein CA11 homolog</fullName>
    </alternativeName>
</protein>
<accession>Q9CR36</accession>
<accession>Q9CTZ5</accession>
<accession>Q9D7K7</accession>